<accession>Q6BY86</accession>
<keyword id="KW-0479">Metal-binding</keyword>
<keyword id="KW-1185">Reference proteome</keyword>
<keyword id="KW-0687">Ribonucleoprotein</keyword>
<keyword id="KW-0689">Ribosomal protein</keyword>
<keyword id="KW-0862">Zinc</keyword>
<gene>
    <name type="primary">RPS29</name>
    <name type="ordered locus">DEHA2A11506g</name>
</gene>
<name>RS29_DEBHA</name>
<sequence>MAHESVWFSHPRNFGKGSRQCRVCSSHSGLIRKYDLNICRQCFRERASDIGFNKFR</sequence>
<evidence type="ECO:0000255" key="1"/>
<evidence type="ECO:0000305" key="2"/>
<protein>
    <recommendedName>
        <fullName evidence="2">Small ribosomal subunit protein uS14</fullName>
    </recommendedName>
    <alternativeName>
        <fullName>40S ribosomal protein S29</fullName>
    </alternativeName>
</protein>
<organism>
    <name type="scientific">Debaryomyces hansenii (strain ATCC 36239 / CBS 767 / BCRC 21394 / JCM 1990 / NBRC 0083 / IGC 2968)</name>
    <name type="common">Yeast</name>
    <name type="synonym">Torulaspora hansenii</name>
    <dbReference type="NCBI Taxonomy" id="284592"/>
    <lineage>
        <taxon>Eukaryota</taxon>
        <taxon>Fungi</taxon>
        <taxon>Dikarya</taxon>
        <taxon>Ascomycota</taxon>
        <taxon>Saccharomycotina</taxon>
        <taxon>Pichiomycetes</taxon>
        <taxon>Debaryomycetaceae</taxon>
        <taxon>Debaryomyces</taxon>
    </lineage>
</organism>
<dbReference type="EMBL" id="CR382133">
    <property type="protein sequence ID" value="CAG84808.1"/>
    <property type="molecule type" value="Genomic_DNA"/>
</dbReference>
<dbReference type="RefSeq" id="XP_456833.1">
    <property type="nucleotide sequence ID" value="XM_456833.1"/>
</dbReference>
<dbReference type="SMR" id="Q6BY86"/>
<dbReference type="FunCoup" id="Q6BY86">
    <property type="interactions" value="804"/>
</dbReference>
<dbReference type="STRING" id="284592.Q6BY86"/>
<dbReference type="GeneID" id="2899447"/>
<dbReference type="KEGG" id="dha:DEHA2A11506g"/>
<dbReference type="VEuPathDB" id="FungiDB:DEHA2A11506g"/>
<dbReference type="eggNOG" id="KOG3506">
    <property type="taxonomic scope" value="Eukaryota"/>
</dbReference>
<dbReference type="HOGENOM" id="CLU_177289_1_1_1"/>
<dbReference type="InParanoid" id="Q6BY86"/>
<dbReference type="OMA" id="HCFREIA"/>
<dbReference type="OrthoDB" id="10252683at2759"/>
<dbReference type="Proteomes" id="UP000000599">
    <property type="component" value="Chromosome A"/>
</dbReference>
<dbReference type="GO" id="GO:0022627">
    <property type="term" value="C:cytosolic small ribosomal subunit"/>
    <property type="evidence" value="ECO:0007669"/>
    <property type="project" value="TreeGrafter"/>
</dbReference>
<dbReference type="GO" id="GO:0003735">
    <property type="term" value="F:structural constituent of ribosome"/>
    <property type="evidence" value="ECO:0007669"/>
    <property type="project" value="InterPro"/>
</dbReference>
<dbReference type="GO" id="GO:0008270">
    <property type="term" value="F:zinc ion binding"/>
    <property type="evidence" value="ECO:0007669"/>
    <property type="project" value="InterPro"/>
</dbReference>
<dbReference type="GO" id="GO:0002181">
    <property type="term" value="P:cytoplasmic translation"/>
    <property type="evidence" value="ECO:0007669"/>
    <property type="project" value="TreeGrafter"/>
</dbReference>
<dbReference type="FunFam" id="4.10.830.10:FF:000002">
    <property type="entry name" value="40S ribosomal protein S29"/>
    <property type="match status" value="1"/>
</dbReference>
<dbReference type="Gene3D" id="4.10.830.10">
    <property type="entry name" value="30s Ribosomal Protein S14, Chain N"/>
    <property type="match status" value="1"/>
</dbReference>
<dbReference type="InterPro" id="IPR001209">
    <property type="entry name" value="Ribosomal_uS14"/>
</dbReference>
<dbReference type="InterPro" id="IPR018271">
    <property type="entry name" value="Ribosomal_uS14_CS"/>
</dbReference>
<dbReference type="InterPro" id="IPR039744">
    <property type="entry name" value="RIbosomal_uS14_euk_arc"/>
</dbReference>
<dbReference type="InterPro" id="IPR043140">
    <property type="entry name" value="Ribosomal_uS14_sf"/>
</dbReference>
<dbReference type="NCBIfam" id="NF004424">
    <property type="entry name" value="PRK05766.1"/>
    <property type="match status" value="1"/>
</dbReference>
<dbReference type="PANTHER" id="PTHR12010">
    <property type="entry name" value="40S RIBOSOMAL PROTEIN S29"/>
    <property type="match status" value="1"/>
</dbReference>
<dbReference type="PANTHER" id="PTHR12010:SF2">
    <property type="entry name" value="40S RIBOSOMAL PROTEIN S29"/>
    <property type="match status" value="1"/>
</dbReference>
<dbReference type="Pfam" id="PF00253">
    <property type="entry name" value="Ribosomal_S14"/>
    <property type="match status" value="1"/>
</dbReference>
<dbReference type="PROSITE" id="PS00527">
    <property type="entry name" value="RIBOSOMAL_S14"/>
    <property type="match status" value="1"/>
</dbReference>
<comment type="cofactor">
    <cofactor evidence="2">
        <name>Zn(2+)</name>
        <dbReference type="ChEBI" id="CHEBI:29105"/>
    </cofactor>
    <text evidence="2">Binds 1 zinc ion per subunit.</text>
</comment>
<comment type="similarity">
    <text evidence="2">Belongs to the universal ribosomal protein uS14 family.</text>
</comment>
<reference key="1">
    <citation type="journal article" date="2004" name="Nature">
        <title>Genome evolution in yeasts.</title>
        <authorList>
            <person name="Dujon B."/>
            <person name="Sherman D."/>
            <person name="Fischer G."/>
            <person name="Durrens P."/>
            <person name="Casaregola S."/>
            <person name="Lafontaine I."/>
            <person name="de Montigny J."/>
            <person name="Marck C."/>
            <person name="Neuveglise C."/>
            <person name="Talla E."/>
            <person name="Goffard N."/>
            <person name="Frangeul L."/>
            <person name="Aigle M."/>
            <person name="Anthouard V."/>
            <person name="Babour A."/>
            <person name="Barbe V."/>
            <person name="Barnay S."/>
            <person name="Blanchin S."/>
            <person name="Beckerich J.-M."/>
            <person name="Beyne E."/>
            <person name="Bleykasten C."/>
            <person name="Boisrame A."/>
            <person name="Boyer J."/>
            <person name="Cattolico L."/>
            <person name="Confanioleri F."/>
            <person name="de Daruvar A."/>
            <person name="Despons L."/>
            <person name="Fabre E."/>
            <person name="Fairhead C."/>
            <person name="Ferry-Dumazet H."/>
            <person name="Groppi A."/>
            <person name="Hantraye F."/>
            <person name="Hennequin C."/>
            <person name="Jauniaux N."/>
            <person name="Joyet P."/>
            <person name="Kachouri R."/>
            <person name="Kerrest A."/>
            <person name="Koszul R."/>
            <person name="Lemaire M."/>
            <person name="Lesur I."/>
            <person name="Ma L."/>
            <person name="Muller H."/>
            <person name="Nicaud J.-M."/>
            <person name="Nikolski M."/>
            <person name="Oztas S."/>
            <person name="Ozier-Kalogeropoulos O."/>
            <person name="Pellenz S."/>
            <person name="Potier S."/>
            <person name="Richard G.-F."/>
            <person name="Straub M.-L."/>
            <person name="Suleau A."/>
            <person name="Swennen D."/>
            <person name="Tekaia F."/>
            <person name="Wesolowski-Louvel M."/>
            <person name="Westhof E."/>
            <person name="Wirth B."/>
            <person name="Zeniou-Meyer M."/>
            <person name="Zivanovic Y."/>
            <person name="Bolotin-Fukuhara M."/>
            <person name="Thierry A."/>
            <person name="Bouchier C."/>
            <person name="Caudron B."/>
            <person name="Scarpelli C."/>
            <person name="Gaillardin C."/>
            <person name="Weissenbach J."/>
            <person name="Wincker P."/>
            <person name="Souciet J.-L."/>
        </authorList>
    </citation>
    <scope>NUCLEOTIDE SEQUENCE [LARGE SCALE GENOMIC DNA]</scope>
    <source>
        <strain>ATCC 36239 / CBS 767 / BCRC 21394 / JCM 1990 / NBRC 0083 / IGC 2968</strain>
    </source>
</reference>
<proteinExistence type="inferred from homology"/>
<feature type="chain" id="PRO_0000268812" description="Small ribosomal subunit protein uS14">
    <location>
        <begin position="1"/>
        <end position="56"/>
    </location>
</feature>
<feature type="binding site" evidence="1">
    <location>
        <position position="21"/>
    </location>
    <ligand>
        <name>Zn(2+)</name>
        <dbReference type="ChEBI" id="CHEBI:29105"/>
    </ligand>
</feature>
<feature type="binding site" evidence="1">
    <location>
        <position position="24"/>
    </location>
    <ligand>
        <name>Zn(2+)</name>
        <dbReference type="ChEBI" id="CHEBI:29105"/>
    </ligand>
</feature>
<feature type="binding site" evidence="1">
    <location>
        <position position="39"/>
    </location>
    <ligand>
        <name>Zn(2+)</name>
        <dbReference type="ChEBI" id="CHEBI:29105"/>
    </ligand>
</feature>
<feature type="binding site" evidence="1">
    <location>
        <position position="42"/>
    </location>
    <ligand>
        <name>Zn(2+)</name>
        <dbReference type="ChEBI" id="CHEBI:29105"/>
    </ligand>
</feature>